<sequence length="2012" mass="227922">MATPLAVNSAASLWGPYKDIWHKVGNALWRRQPEAVHLLDKILKKHKPDFISLFKNPPKNVQQHEKVQKASTEGVAIQGQQGTRLLPEQLIKEAFILSDLFDIGELAAVELLLAGEHQQPHFPGLTRGLVAVLLYWDGKRCIANSLKALIQSRRGKTWTLELSPELASMTTRFTDELMEQGLTYKVLTLVSQIDVNNEFEKLQRERGLGSEKHRKEVSDLIKECRQSLAESLFAWACQSPLGKEDTLLLIGHLERVTVEANGSLDAVNLALLMALLYCFDISFIEQSTEERDDMIHQLPLLTEKQYIATIHSRLQDSQLWKLPGLQATVRLAWALALRGISQLPDVTALAEFTEADEAMAELAIADNVFLFLMESVVVSEYFYQEEFYIRRVHNLITDFLALMPMKVKQLRNRADEDARMIHMSMQMGNEPPISLRRDLEHLMLLIGELYKKNPFHLELALEYWCPTEPLQTPTIMGSYLGVAHQRPPQRQVVLSKFVRQMGDLLPPTIYIPYLKMLQGLANGPQCAHYCFSLLKVNGSSHVENIQGAGGSPVSWEHFFHSLMLYHEHLRKDLPSADSVQYRHLPSRGITQKEQDGLIAFLQLTSTIITWSENARLALCEHPQWTPVVVILGLLQCSIPPVLKAELLKTLAAFGKSPEIAASLWQSLEYTQILQTVRIPSQRQAIGIEVELNEIESRCEEYPLTRAFCQLISTLVESSFPSNLGAGLRPPGFDPYLQFLRDSVFLRFRTRAYRRAAEKWEVAEVVLEVFYKLLRDYEPQLEDFVDQFVELQGEEIIAYKPPGFSLMYHLLNESPMLELALSLLEEGVKQLDTYAPFPGKKHLEKAVQHCLALLNLTLQKENLFMDLLRESQLALIVCPLEQLLQGINPRTKKADNVVNIARYLYHGNTNPELAFESAKILCCISCNSNIQIKLVGDFTHDQSISQKLMAGFVECLDCEDAEEFVRLEEGSELEKKLVAIRHETRIHILNLLITSLECNPPNLALYLLGFELKKPVSTTNLQDPGVLGCPRTCLHAILNILEKGTEGRTGPVAVRESPQLAELCYQVIYQLCACSDTSGPTMRYLRTSQDFLFSQLQYLPFSNKEYEISMLNQMSWLMKTASIELRVTSLNRQRSHTQRLLHLLLDDMPVKPYSDGEGGIEDENRSVSGFLHFDTATKVRRKILNILDSIDFSQEIPEPLQLDFFDRAQIEQVIANCEHKNLRGQTVCNVKLLHRVLVAEVNALQGMAAIGQRPLLMEEISTVLQYVVGRNKLLQCLHAKRHALESWRQLVEIILTACPQDLIQAEDRQLIIRDILQDVHDKILDDEAAQELMPVVAGAVFTLTAHLSQAVLTEQKETSVLGPAEAHYAFMLDSCFTSPPPEENPLVGFASIGDSSLYIILKKLLDFILKTGGGFQRVRTHLYGSLLYYLQIAQRPDEPDTLEAAKKTMWERLTAPEDVFSKLQRENIAIIESYGAALMEVVCRDACDGHEIGRMLALALLDRIVSVDKQQQWLLYLSNSGYLKVLVDSLVEDDRTLQSLLTPQPPLLKALYTYESKMAFLTRVAKIQQGALELLRSGVIVRLAQCQVYDMRPETDPQSMFGMRDPPMFIPTPVDRYRQILLPALQLCQVILTSSMAQHLQAAGQVLQFLISHSDTIQAILRCQDVSAGSLQELALLTGIISKAALPGILSELDVDVNEGSLMELQGHIGRFQRQCLGLLSRFGGSDRLRQFKFQDDNVEGDKVSKKDEIELAMQQICANVMEYCQSLMLQSSPTFQHAVCLFTPSLSETVNRDGPRQDTQAPVVPYWRLPGLGIIIYLLKQSANDFFSYYDSHRQSVSKLQNVEQLPPDEIKELCQSVMPAGVDKISTAQKYVLARRRLVKVINNRAKLLSLCSFIIETCLFILWRHLEYYLLHCMPTDSQDSLFASRTLFKSRRLQDSFASETNLDFRSGLAIVSQHDLDQLQADAINAFGESLQKKLLDIEGLYSKVRSRYSFIQALVRRIRGLLRISRN</sequence>
<name>NU205_HUMAN</name>
<comment type="function">
    <text evidence="2 6 9">Plays a role in the nuclear pore complex (NPC) assembly and/or maintenance (PubMed:9348540). May anchor NUP62 and other nucleoporins, but not NUP153 and TPR, to the NPC (PubMed:15229283). In association with TMEM209, may be involved in nuclear transport of various nuclear proteins in addition to MYC (PubMed:22719065).</text>
</comment>
<comment type="subunit">
    <text evidence="1 2 4 5 7 9">Part of the nuclear pore complex (NPC) (PubMed:15229283, PubMed:9348540). Forms a complex with NUP35, NUP93, NUP155 and lamin B (PubMed:15703211, PubMed:26878725). Does not interact with TPR (PubMed:12802065). Interacts with TMEM209 and MYC (PubMed:18691976).</text>
</comment>
<comment type="interaction">
    <interactant intactId="EBI-1045046">
        <id>Q92621</id>
    </interactant>
    <interactant intactId="EBI-11735795">
        <id>Q6VGT1</id>
        <label>E4</label>
    </interactant>
    <organismsDiffer>true</organismsDiffer>
    <experiments>5</experiments>
</comment>
<comment type="interaction">
    <interactant intactId="EBI-1045046">
        <id>Q92621</id>
    </interactant>
    <interactant intactId="EBI-6164309">
        <id>P04618</id>
        <label>rev</label>
    </interactant>
    <organismsDiffer>true</organismsDiffer>
    <experiments>2</experiments>
</comment>
<comment type="subcellular location">
    <subcellularLocation>
        <location evidence="1 2">Nucleus membrane</location>
        <topology evidence="1 2">Peripheral membrane protein</topology>
    </subcellularLocation>
    <subcellularLocation>
        <location evidence="1 2 9">Nucleus</location>
        <location evidence="1 2 9">Nuclear pore complex</location>
    </subcellularLocation>
    <text evidence="2">Localized near the center, on both the cytoplasmic and nuclear side, of the NPC core structure.</text>
</comment>
<comment type="tissue specificity">
    <text evidence="6">Expressed in the testis.</text>
</comment>
<comment type="disease" evidence="7">
    <disease id="DI-04700">
        <name>Nephrotic syndrome 13</name>
        <acronym>NPHS13</acronym>
        <description>A form of nephrotic syndrome, a renal disease clinically characterized by severe proteinuria, resulting in complications such as hypoalbuminemia, hyperlipidemia and edema. Kidney biopsies show non-specific histologic changes such as focal segmental glomerulosclerosis and diffuse mesangial proliferation. Some affected individuals have an inherited steroid-resistant form and progress to end-stage renal failure.</description>
        <dbReference type="MIM" id="616893"/>
    </disease>
    <text>The disease is caused by variants affecting the gene represented in this entry.</text>
</comment>
<comment type="similarity">
    <text evidence="11">Belongs to the NUP186/NUP192/NUP205 family.</text>
</comment>
<comment type="sequence caution" evidence="11">
    <conflict type="erroneous initiation">
        <sequence resource="EMBL-CDS" id="BAA13214"/>
    </conflict>
    <text>Extended N-terminus.</text>
</comment>
<gene>
    <name type="primary">NUP205</name>
    <name type="synonym">C7orf14</name>
    <name type="synonym">KIAA0225</name>
</gene>
<evidence type="ECO:0000269" key="1">
    <source>
    </source>
</evidence>
<evidence type="ECO:0000269" key="2">
    <source>
    </source>
</evidence>
<evidence type="ECO:0000269" key="3">
    <source>
    </source>
</evidence>
<evidence type="ECO:0000269" key="4">
    <source>
    </source>
</evidence>
<evidence type="ECO:0000269" key="5">
    <source>
    </source>
</evidence>
<evidence type="ECO:0000269" key="6">
    <source>
    </source>
</evidence>
<evidence type="ECO:0000269" key="7">
    <source>
    </source>
</evidence>
<evidence type="ECO:0000269" key="8">
    <source>
    </source>
</evidence>
<evidence type="ECO:0000269" key="9">
    <source>
    </source>
</evidence>
<evidence type="ECO:0000269" key="10">
    <source ref="3"/>
</evidence>
<evidence type="ECO:0000305" key="11"/>
<evidence type="ECO:0007744" key="12">
    <source>
    </source>
</evidence>
<evidence type="ECO:0007744" key="13">
    <source>
    </source>
</evidence>
<evidence type="ECO:0007744" key="14">
    <source>
    </source>
</evidence>
<evidence type="ECO:0007744" key="15">
    <source>
    </source>
</evidence>
<evidence type="ECO:0007744" key="16">
    <source>
    </source>
</evidence>
<evidence type="ECO:0007744" key="17">
    <source>
    </source>
</evidence>
<evidence type="ECO:0007744" key="18">
    <source>
    </source>
</evidence>
<keyword id="KW-0002">3D-structure</keyword>
<keyword id="KW-0007">Acetylation</keyword>
<keyword id="KW-0903">Direct protein sequencing</keyword>
<keyword id="KW-0225">Disease variant</keyword>
<keyword id="KW-0472">Membrane</keyword>
<keyword id="KW-0509">mRNA transport</keyword>
<keyword id="KW-0906">Nuclear pore complex</keyword>
<keyword id="KW-0539">Nucleus</keyword>
<keyword id="KW-0597">Phosphoprotein</keyword>
<keyword id="KW-0653">Protein transport</keyword>
<keyword id="KW-1267">Proteomics identification</keyword>
<keyword id="KW-1185">Reference proteome</keyword>
<keyword id="KW-0811">Translocation</keyword>
<keyword id="KW-0813">Transport</keyword>
<proteinExistence type="evidence at protein level"/>
<feature type="initiator methionine" description="Removed" evidence="13 16">
    <location>
        <position position="1"/>
    </location>
</feature>
<feature type="chain" id="PRO_0000204859" description="Nuclear pore complex protein Nup205">
    <location>
        <begin position="2"/>
        <end position="2012"/>
    </location>
</feature>
<feature type="modified residue" description="N-acetylalanine" evidence="13 16">
    <location>
        <position position="2"/>
    </location>
</feature>
<feature type="modified residue" description="Phosphothreonine" evidence="12 17">
    <location>
        <position position="3"/>
    </location>
</feature>
<feature type="modified residue" description="Phosphoserine" evidence="17">
    <location>
        <position position="575"/>
    </location>
</feature>
<feature type="modified residue" description="Phosphoserine" evidence="17">
    <location>
        <position position="1165"/>
    </location>
</feature>
<feature type="modified residue" description="Phosphoserine" evidence="17">
    <location>
        <position position="1167"/>
    </location>
</feature>
<feature type="modified residue" description="Phosphoserine" evidence="12 14 15 17 18">
    <location>
        <position position="1939"/>
    </location>
</feature>
<feature type="modified residue" description="Phosphoserine" evidence="14 15 17">
    <location>
        <position position="1942"/>
    </location>
</feature>
<feature type="sequence variant" id="VAR_050567" description="In dbSNP:rs7797639.">
    <original>P</original>
    <variation>S</variation>
    <location>
        <position position="33"/>
    </location>
</feature>
<feature type="sequence variant" id="VAR_050568" description="In dbSNP:rs7810767." evidence="3 8 10">
    <original>E</original>
    <variation>Q</variation>
    <location>
        <position position="1356"/>
    </location>
</feature>
<feature type="sequence variant" id="VAR_076471" description="In NPHS13; abrogates interaction with NUP93; dbSNP:rs869312984." evidence="7">
    <original>F</original>
    <variation>S</variation>
    <location>
        <position position="1995"/>
    </location>
</feature>
<organism>
    <name type="scientific">Homo sapiens</name>
    <name type="common">Human</name>
    <dbReference type="NCBI Taxonomy" id="9606"/>
    <lineage>
        <taxon>Eukaryota</taxon>
        <taxon>Metazoa</taxon>
        <taxon>Chordata</taxon>
        <taxon>Craniata</taxon>
        <taxon>Vertebrata</taxon>
        <taxon>Euteleostomi</taxon>
        <taxon>Mammalia</taxon>
        <taxon>Eutheria</taxon>
        <taxon>Euarchontoglires</taxon>
        <taxon>Primates</taxon>
        <taxon>Haplorrhini</taxon>
        <taxon>Catarrhini</taxon>
        <taxon>Hominidae</taxon>
        <taxon>Homo</taxon>
    </lineage>
</organism>
<protein>
    <recommendedName>
        <fullName>Nuclear pore complex protein Nup205</fullName>
    </recommendedName>
    <alternativeName>
        <fullName>205 kDa nucleoporin</fullName>
    </alternativeName>
    <alternativeName>
        <fullName>Nucleoporin Nup205</fullName>
    </alternativeName>
</protein>
<reference key="1">
    <citation type="journal article" date="1996" name="DNA Res.">
        <title>Prediction of the coding sequences of unidentified human genes. VI. The coding sequences of 80 new genes (KIAA0201-KIAA0280) deduced by analysis of cDNA clones from cell line KG-1 and brain.</title>
        <authorList>
            <person name="Nagase T."/>
            <person name="Seki N."/>
            <person name="Ishikawa K."/>
            <person name="Ohira M."/>
            <person name="Kawarabayasi Y."/>
            <person name="Ohara O."/>
            <person name="Tanaka A."/>
            <person name="Kotani H."/>
            <person name="Miyajima N."/>
            <person name="Nomura N."/>
        </authorList>
    </citation>
    <scope>NUCLEOTIDE SEQUENCE [LARGE SCALE MRNA]</scope>
    <scope>VARIANT GLN-1356</scope>
    <source>
        <tissue>Bone marrow</tissue>
    </source>
</reference>
<reference key="2">
    <citation type="journal article" date="2003" name="Nature">
        <title>The DNA sequence of human chromosome 7.</title>
        <authorList>
            <person name="Hillier L.W."/>
            <person name="Fulton R.S."/>
            <person name="Fulton L.A."/>
            <person name="Graves T.A."/>
            <person name="Pepin K.H."/>
            <person name="Wagner-McPherson C."/>
            <person name="Layman D."/>
            <person name="Maas J."/>
            <person name="Jaeger S."/>
            <person name="Walker R."/>
            <person name="Wylie K."/>
            <person name="Sekhon M."/>
            <person name="Becker M.C."/>
            <person name="O'Laughlin M.D."/>
            <person name="Schaller M.E."/>
            <person name="Fewell G.A."/>
            <person name="Delehaunty K.D."/>
            <person name="Miner T.L."/>
            <person name="Nash W.E."/>
            <person name="Cordes M."/>
            <person name="Du H."/>
            <person name="Sun H."/>
            <person name="Edwards J."/>
            <person name="Bradshaw-Cordum H."/>
            <person name="Ali J."/>
            <person name="Andrews S."/>
            <person name="Isak A."/>
            <person name="Vanbrunt A."/>
            <person name="Nguyen C."/>
            <person name="Du F."/>
            <person name="Lamar B."/>
            <person name="Courtney L."/>
            <person name="Kalicki J."/>
            <person name="Ozersky P."/>
            <person name="Bielicki L."/>
            <person name="Scott K."/>
            <person name="Holmes A."/>
            <person name="Harkins R."/>
            <person name="Harris A."/>
            <person name="Strong C.M."/>
            <person name="Hou S."/>
            <person name="Tomlinson C."/>
            <person name="Dauphin-Kohlberg S."/>
            <person name="Kozlowicz-Reilly A."/>
            <person name="Leonard S."/>
            <person name="Rohlfing T."/>
            <person name="Rock S.M."/>
            <person name="Tin-Wollam A.-M."/>
            <person name="Abbott A."/>
            <person name="Minx P."/>
            <person name="Maupin R."/>
            <person name="Strowmatt C."/>
            <person name="Latreille P."/>
            <person name="Miller N."/>
            <person name="Johnson D."/>
            <person name="Murray J."/>
            <person name="Woessner J.P."/>
            <person name="Wendl M.C."/>
            <person name="Yang S.-P."/>
            <person name="Schultz B.R."/>
            <person name="Wallis J.W."/>
            <person name="Spieth J."/>
            <person name="Bieri T.A."/>
            <person name="Nelson J.O."/>
            <person name="Berkowicz N."/>
            <person name="Wohldmann P.E."/>
            <person name="Cook L.L."/>
            <person name="Hickenbotham M.T."/>
            <person name="Eldred J."/>
            <person name="Williams D."/>
            <person name="Bedell J.A."/>
            <person name="Mardis E.R."/>
            <person name="Clifton S.W."/>
            <person name="Chissoe S.L."/>
            <person name="Marra M.A."/>
            <person name="Raymond C."/>
            <person name="Haugen E."/>
            <person name="Gillett W."/>
            <person name="Zhou Y."/>
            <person name="James R."/>
            <person name="Phelps K."/>
            <person name="Iadanoto S."/>
            <person name="Bubb K."/>
            <person name="Simms E."/>
            <person name="Levy R."/>
            <person name="Clendenning J."/>
            <person name="Kaul R."/>
            <person name="Kent W.J."/>
            <person name="Furey T.S."/>
            <person name="Baertsch R.A."/>
            <person name="Brent M.R."/>
            <person name="Keibler E."/>
            <person name="Flicek P."/>
            <person name="Bork P."/>
            <person name="Suyama M."/>
            <person name="Bailey J.A."/>
            <person name="Portnoy M.E."/>
            <person name="Torrents D."/>
            <person name="Chinwalla A.T."/>
            <person name="Gish W.R."/>
            <person name="Eddy S.R."/>
            <person name="McPherson J.D."/>
            <person name="Olson M.V."/>
            <person name="Eichler E.E."/>
            <person name="Green E.D."/>
            <person name="Waterston R.H."/>
            <person name="Wilson R.K."/>
        </authorList>
    </citation>
    <scope>NUCLEOTIDE SEQUENCE [LARGE SCALE GENOMIC DNA]</scope>
</reference>
<reference key="3">
    <citation type="submission" date="2005-09" db="EMBL/GenBank/DDBJ databases">
        <authorList>
            <person name="Mural R.J."/>
            <person name="Istrail S."/>
            <person name="Sutton G.G."/>
            <person name="Florea L."/>
            <person name="Halpern A.L."/>
            <person name="Mobarry C.M."/>
            <person name="Lippert R."/>
            <person name="Walenz B."/>
            <person name="Shatkay H."/>
            <person name="Dew I."/>
            <person name="Miller J.R."/>
            <person name="Flanigan M.J."/>
            <person name="Edwards N.J."/>
            <person name="Bolanos R."/>
            <person name="Fasulo D."/>
            <person name="Halldorsson B.V."/>
            <person name="Hannenhalli S."/>
            <person name="Turner R."/>
            <person name="Yooseph S."/>
            <person name="Lu F."/>
            <person name="Nusskern D.R."/>
            <person name="Shue B.C."/>
            <person name="Zheng X.H."/>
            <person name="Zhong F."/>
            <person name="Delcher A.L."/>
            <person name="Huson D.H."/>
            <person name="Kravitz S.A."/>
            <person name="Mouchard L."/>
            <person name="Reinert K."/>
            <person name="Remington K.A."/>
            <person name="Clark A.G."/>
            <person name="Waterman M.S."/>
            <person name="Eichler E.E."/>
            <person name="Adams M.D."/>
            <person name="Hunkapiller M.W."/>
            <person name="Myers E.W."/>
            <person name="Venter J.C."/>
        </authorList>
    </citation>
    <scope>NUCLEOTIDE SEQUENCE [LARGE SCALE GENOMIC DNA]</scope>
    <scope>VARIANT GLN-1356</scope>
</reference>
<reference key="4">
    <citation type="journal article" date="2004" name="Genome Res.">
        <title>The status, quality, and expansion of the NIH full-length cDNA project: the Mammalian Gene Collection (MGC).</title>
        <authorList>
            <consortium name="The MGC Project Team"/>
        </authorList>
    </citation>
    <scope>NUCLEOTIDE SEQUENCE [LARGE SCALE MRNA]</scope>
    <scope>VARIANT GLN-1356</scope>
    <source>
        <tissue>Skin</tissue>
    </source>
</reference>
<reference key="5">
    <citation type="journal article" date="1997" name="Mol. Biol. Cell">
        <title>Nup93, a vertebrate homologue of yeast Nic96p, forms a complex with a novel 205-kDa protein and is required for correct nuclear pore assembly.</title>
        <authorList>
            <person name="Grandi P."/>
            <person name="Dang T."/>
            <person name="Pane N."/>
            <person name="Shevchenko A."/>
            <person name="Mann M."/>
            <person name="Forbes D."/>
            <person name="Hurt E."/>
        </authorList>
    </citation>
    <scope>PROTEIN SEQUENCE OF 85-92; 572-581; 1452-1461 AND 1494-1502</scope>
    <scope>FUNCTION</scope>
    <scope>IDENTIFICATION IN THE NUCLEAR PORE COMPLEX</scope>
    <scope>SUBCELLULAR LOCATION</scope>
</reference>
<reference key="6">
    <citation type="journal article" date="2003" name="Mol. Biol. Cell">
        <title>Direct interaction with nup153 mediates binding of Tpr to the periphery of the nuclear pore complex.</title>
        <authorList>
            <person name="Hase M.E."/>
            <person name="Cordes V.C."/>
        </authorList>
    </citation>
    <scope>LACK OF INTERACTION WITH TPR</scope>
    <scope>SUBCELLULAR LOCATION</scope>
</reference>
<reference key="7">
    <citation type="journal article" date="2004" name="Mol. Biol. Cell">
        <title>Nucleoporins as components of the nuclear pore complex core structure and Tpr as the architectural element of the nuclear basket.</title>
        <authorList>
            <person name="Krull S."/>
            <person name="Thyberg J."/>
            <person name="Bjorkroth B."/>
            <person name="Rackwitz H.R."/>
            <person name="Cordes V.C."/>
        </authorList>
    </citation>
    <scope>FUNCTION</scope>
    <scope>IDENTIFICATION IN THE NUCLEAR PORE COMPLEX</scope>
    <scope>SUBCELLULAR LOCATION</scope>
</reference>
<reference key="8">
    <citation type="journal article" date="2005" name="Mol. Biol. Cell">
        <title>Vertebrate Nup53 interacts with the nuclear lamina and is required for the assembly of a Nup93-containing complex.</title>
        <authorList>
            <person name="Hawryluk-Gara L.A."/>
            <person name="Shibuya E.K."/>
            <person name="Wozniak R.W."/>
        </authorList>
    </citation>
    <scope>IDENTIFICATION IN A COMPLEX WITH LAMIN B; NUP35; NUP93 AND NUP155</scope>
</reference>
<reference key="9">
    <citation type="journal article" date="2008" name="Mol. Cell">
        <title>Kinase-selective enrichment enables quantitative phosphoproteomics of the kinome across the cell cycle.</title>
        <authorList>
            <person name="Daub H."/>
            <person name="Olsen J.V."/>
            <person name="Bairlein M."/>
            <person name="Gnad F."/>
            <person name="Oppermann F.S."/>
            <person name="Korner R."/>
            <person name="Greff Z."/>
            <person name="Keri G."/>
            <person name="Stemmann O."/>
            <person name="Mann M."/>
        </authorList>
    </citation>
    <scope>PHOSPHORYLATION [LARGE SCALE ANALYSIS] AT THR-3 AND SER-1939</scope>
    <scope>IDENTIFICATION BY MASS SPECTROMETRY [LARGE SCALE ANALYSIS]</scope>
    <source>
        <tissue>Cervix carcinoma</tissue>
    </source>
</reference>
<reference key="10">
    <citation type="journal article" date="2009" name="Anal. Chem.">
        <title>Lys-N and trypsin cover complementary parts of the phosphoproteome in a refined SCX-based approach.</title>
        <authorList>
            <person name="Gauci S."/>
            <person name="Helbig A.O."/>
            <person name="Slijper M."/>
            <person name="Krijgsveld J."/>
            <person name="Heck A.J."/>
            <person name="Mohammed S."/>
        </authorList>
    </citation>
    <scope>ACETYLATION [LARGE SCALE ANALYSIS] AT ALA-2</scope>
    <scope>CLEAVAGE OF INITIATOR METHIONINE [LARGE SCALE ANALYSIS]</scope>
    <scope>IDENTIFICATION BY MASS SPECTROMETRY [LARGE SCALE ANALYSIS]</scope>
</reference>
<reference key="11">
    <citation type="journal article" date="2009" name="Sci. Signal.">
        <title>Quantitative phosphoproteomic analysis of T cell receptor signaling reveals system-wide modulation of protein-protein interactions.</title>
        <authorList>
            <person name="Mayya V."/>
            <person name="Lundgren D.H."/>
            <person name="Hwang S.-I."/>
            <person name="Rezaul K."/>
            <person name="Wu L."/>
            <person name="Eng J.K."/>
            <person name="Rodionov V."/>
            <person name="Han D.K."/>
        </authorList>
    </citation>
    <scope>PHOSPHORYLATION [LARGE SCALE ANALYSIS] AT SER-1939 AND SER-1942</scope>
    <scope>IDENTIFICATION BY MASS SPECTROMETRY [LARGE SCALE ANALYSIS]</scope>
    <source>
        <tissue>Leukemic T-cell</tissue>
    </source>
</reference>
<reference key="12">
    <citation type="journal article" date="2010" name="Sci. Signal.">
        <title>Quantitative phosphoproteomics reveals widespread full phosphorylation site occupancy during mitosis.</title>
        <authorList>
            <person name="Olsen J.V."/>
            <person name="Vermeulen M."/>
            <person name="Santamaria A."/>
            <person name="Kumar C."/>
            <person name="Miller M.L."/>
            <person name="Jensen L.J."/>
            <person name="Gnad F."/>
            <person name="Cox J."/>
            <person name="Jensen T.S."/>
            <person name="Nigg E.A."/>
            <person name="Brunak S."/>
            <person name="Mann M."/>
        </authorList>
    </citation>
    <scope>PHOSPHORYLATION [LARGE SCALE ANALYSIS] AT SER-1939 AND SER-1942</scope>
    <scope>IDENTIFICATION BY MASS SPECTROMETRY [LARGE SCALE ANALYSIS]</scope>
    <source>
        <tissue>Cervix carcinoma</tissue>
    </source>
</reference>
<reference key="13">
    <citation type="journal article" date="2011" name="BMC Syst. Biol.">
        <title>Initial characterization of the human central proteome.</title>
        <authorList>
            <person name="Burkard T.R."/>
            <person name="Planyavsky M."/>
            <person name="Kaupe I."/>
            <person name="Breitwieser F.P."/>
            <person name="Buerckstuemmer T."/>
            <person name="Bennett K.L."/>
            <person name="Superti-Furga G."/>
            <person name="Colinge J."/>
        </authorList>
    </citation>
    <scope>IDENTIFICATION BY MASS SPECTROMETRY [LARGE SCALE ANALYSIS]</scope>
</reference>
<reference key="14">
    <citation type="journal article" date="2012" name="Mol. Cell. Proteomics">
        <title>Comparative large-scale characterisation of plant vs. mammal proteins reveals similar and idiosyncratic N-alpha acetylation features.</title>
        <authorList>
            <person name="Bienvenut W.V."/>
            <person name="Sumpton D."/>
            <person name="Martinez A."/>
            <person name="Lilla S."/>
            <person name="Espagne C."/>
            <person name="Meinnel T."/>
            <person name="Giglione C."/>
        </authorList>
    </citation>
    <scope>ACETYLATION [LARGE SCALE ANALYSIS] AT ALA-2</scope>
    <scope>CLEAVAGE OF INITIATOR METHIONINE [LARGE SCALE ANALYSIS]</scope>
    <scope>IDENTIFICATION BY MASS SPECTROMETRY [LARGE SCALE ANALYSIS]</scope>
</reference>
<reference key="15">
    <citation type="journal article" date="2013" name="J. Proteome Res.">
        <title>Toward a comprehensive characterization of a human cancer cell phosphoproteome.</title>
        <authorList>
            <person name="Zhou H."/>
            <person name="Di Palma S."/>
            <person name="Preisinger C."/>
            <person name="Peng M."/>
            <person name="Polat A.N."/>
            <person name="Heck A.J."/>
            <person name="Mohammed S."/>
        </authorList>
    </citation>
    <scope>PHOSPHORYLATION [LARGE SCALE ANALYSIS] AT THR-3; SER-575; SER-1165; SER-1167; SER-1939 AND SER-1942</scope>
    <scope>IDENTIFICATION BY MASS SPECTROMETRY [LARGE SCALE ANALYSIS]</scope>
    <source>
        <tissue>Cervix carcinoma</tissue>
        <tissue>Erythroleukemia</tissue>
    </source>
</reference>
<reference key="16">
    <citation type="journal article" date="2014" name="J. Proteomics">
        <title>An enzyme assisted RP-RPLC approach for in-depth analysis of human liver phosphoproteome.</title>
        <authorList>
            <person name="Bian Y."/>
            <person name="Song C."/>
            <person name="Cheng K."/>
            <person name="Dong M."/>
            <person name="Wang F."/>
            <person name="Huang J."/>
            <person name="Sun D."/>
            <person name="Wang L."/>
            <person name="Ye M."/>
            <person name="Zou H."/>
        </authorList>
    </citation>
    <scope>PHOSPHORYLATION [LARGE SCALE ANALYSIS] AT SER-1939</scope>
    <scope>IDENTIFICATION BY MASS SPECTROMETRY [LARGE SCALE ANALYSIS]</scope>
    <source>
        <tissue>Liver</tissue>
    </source>
</reference>
<reference key="17">
    <citation type="journal article" date="2012" name="Cancer Res.">
        <title>Critical function for nuclear envelope protein TMEM209 in human pulmonary carcinogenesis.</title>
        <authorList>
            <person name="Fujitomo T."/>
            <person name="Daigo Y."/>
            <person name="Matsuda K."/>
            <person name="Ueda K."/>
            <person name="Nakamura Y."/>
        </authorList>
    </citation>
    <scope>FUNCTION</scope>
    <scope>INTERACTION WITH TMEM209 AND MYC</scope>
    <scope>TISSUE SPECIFICITY</scope>
</reference>
<reference key="18">
    <citation type="journal article" date="2016" name="Nat. Genet.">
        <title>Mutations in nuclear pore genes NUP93, NUP205 and XPO5 cause steroid-resistant nephrotic syndrome.</title>
        <authorList>
            <person name="Braun D.A."/>
            <person name="Sadowski C.E."/>
            <person name="Kohl S."/>
            <person name="Lovric S."/>
            <person name="Astrinidis S.A."/>
            <person name="Pabst W.L."/>
            <person name="Gee H.Y."/>
            <person name="Ashraf S."/>
            <person name="Lawson J.A."/>
            <person name="Shril S."/>
            <person name="Airik M."/>
            <person name="Tan W."/>
            <person name="Schapiro D."/>
            <person name="Rao J."/>
            <person name="Choi W.I."/>
            <person name="Hermle T."/>
            <person name="Kemper M.J."/>
            <person name="Pohl M."/>
            <person name="Ozaltin F."/>
            <person name="Konrad M."/>
            <person name="Bogdanovic R."/>
            <person name="Buescher R."/>
            <person name="Helmchen U."/>
            <person name="Serdaroglu E."/>
            <person name="Lifton R.P."/>
            <person name="Antonin W."/>
            <person name="Hildebrandt F."/>
        </authorList>
    </citation>
    <scope>INVOLVEMENT IN NPHS13</scope>
    <scope>VARIANT NPHS13 SER-1995</scope>
    <scope>CHARACTERIZATION OF VARIANT NPHS13 SER-1995</scope>
    <scope>INTERACTION WITH NUP93</scope>
</reference>
<accession>Q92621</accession>
<accession>A6H8X3</accession>
<accession>Q86YC1</accession>
<dbReference type="EMBL" id="D86978">
    <property type="protein sequence ID" value="BAA13214.1"/>
    <property type="status" value="ALT_INIT"/>
    <property type="molecule type" value="mRNA"/>
</dbReference>
<dbReference type="EMBL" id="AC093107">
    <property type="status" value="NOT_ANNOTATED_CDS"/>
    <property type="molecule type" value="Genomic_DNA"/>
</dbReference>
<dbReference type="EMBL" id="CH471070">
    <property type="protein sequence ID" value="EAW83855.1"/>
    <property type="molecule type" value="Genomic_DNA"/>
</dbReference>
<dbReference type="EMBL" id="BC044255">
    <property type="protein sequence ID" value="AAH44255.1"/>
    <property type="molecule type" value="mRNA"/>
</dbReference>
<dbReference type="EMBL" id="BC136624">
    <property type="protein sequence ID" value="AAI36625.1"/>
    <property type="molecule type" value="mRNA"/>
</dbReference>
<dbReference type="EMBL" id="BC146784">
    <property type="protein sequence ID" value="AAI46785.1"/>
    <property type="molecule type" value="mRNA"/>
</dbReference>
<dbReference type="CCDS" id="CCDS34759.1"/>
<dbReference type="RefSeq" id="NP_001316363.1">
    <property type="nucleotide sequence ID" value="NM_001329434.1"/>
</dbReference>
<dbReference type="RefSeq" id="NP_055950.2">
    <property type="nucleotide sequence ID" value="NM_015135.3"/>
</dbReference>
<dbReference type="PDB" id="5IJN">
    <property type="method" value="EM"/>
    <property type="resolution" value="21.40 A"/>
    <property type="chains" value="D/J/P/V=1-2012"/>
</dbReference>
<dbReference type="PDB" id="5IJO">
    <property type="method" value="EM"/>
    <property type="resolution" value="21.40 A"/>
    <property type="chains" value="D/P=1-2012"/>
</dbReference>
<dbReference type="PDB" id="7PER">
    <property type="method" value="EM"/>
    <property type="resolution" value="35.00 A"/>
    <property type="chains" value="D/J/P/V=1-2012"/>
</dbReference>
<dbReference type="PDB" id="7R5J">
    <property type="method" value="EM"/>
    <property type="resolution" value="50.00 A"/>
    <property type="chains" value="C0/C1/C2/C3/C4=1-2012"/>
</dbReference>
<dbReference type="PDB" id="7R5K">
    <property type="method" value="EM"/>
    <property type="resolution" value="12.00 A"/>
    <property type="chains" value="C0/C1/C2/C3/C4=1-2012"/>
</dbReference>
<dbReference type="PDBsum" id="5IJN"/>
<dbReference type="PDBsum" id="5IJO"/>
<dbReference type="PDBsum" id="7PER"/>
<dbReference type="PDBsum" id="7R5J"/>
<dbReference type="PDBsum" id="7R5K"/>
<dbReference type="EMDB" id="EMD-14321"/>
<dbReference type="EMDB" id="EMD-14322"/>
<dbReference type="SMR" id="Q92621"/>
<dbReference type="BioGRID" id="116777">
    <property type="interactions" value="266"/>
</dbReference>
<dbReference type="ComplexPortal" id="CPX-873">
    <property type="entry name" value="Nuclear pore complex"/>
</dbReference>
<dbReference type="CORUM" id="Q92621"/>
<dbReference type="DIP" id="DIP-44021N"/>
<dbReference type="FunCoup" id="Q92621">
    <property type="interactions" value="4324"/>
</dbReference>
<dbReference type="IntAct" id="Q92621">
    <property type="interactions" value="135"/>
</dbReference>
<dbReference type="MINT" id="Q92621"/>
<dbReference type="STRING" id="9606.ENSP00000285968"/>
<dbReference type="TCDB" id="1.I.1.1.3">
    <property type="family name" value="the nuclear pore complex (npc) family"/>
</dbReference>
<dbReference type="GlyGen" id="Q92621">
    <property type="glycosylation" value="2 sites, 1 O-linked glycan (2 sites)"/>
</dbReference>
<dbReference type="iPTMnet" id="Q92621"/>
<dbReference type="MetOSite" id="Q92621"/>
<dbReference type="PhosphoSitePlus" id="Q92621"/>
<dbReference type="SwissPalm" id="Q92621"/>
<dbReference type="BioMuta" id="NUP205"/>
<dbReference type="DMDM" id="296439283"/>
<dbReference type="jPOST" id="Q92621"/>
<dbReference type="MassIVE" id="Q92621"/>
<dbReference type="PaxDb" id="9606-ENSP00000285968"/>
<dbReference type="PeptideAtlas" id="Q92621"/>
<dbReference type="ProteomicsDB" id="75374"/>
<dbReference type="Pumba" id="Q92621"/>
<dbReference type="Antibodypedia" id="18139">
    <property type="antibodies" value="50 antibodies from 19 providers"/>
</dbReference>
<dbReference type="DNASU" id="23165"/>
<dbReference type="Ensembl" id="ENST00000285968.11">
    <property type="protein sequence ID" value="ENSP00000285968.6"/>
    <property type="gene ID" value="ENSG00000155561.15"/>
</dbReference>
<dbReference type="GeneID" id="23165"/>
<dbReference type="KEGG" id="hsa:23165"/>
<dbReference type="MANE-Select" id="ENST00000285968.11">
    <property type="protein sequence ID" value="ENSP00000285968.6"/>
    <property type="RefSeq nucleotide sequence ID" value="NM_015135.3"/>
    <property type="RefSeq protein sequence ID" value="NP_055950.2"/>
</dbReference>
<dbReference type="UCSC" id="uc003vsw.4">
    <property type="organism name" value="human"/>
</dbReference>
<dbReference type="AGR" id="HGNC:18658"/>
<dbReference type="CTD" id="23165"/>
<dbReference type="DisGeNET" id="23165"/>
<dbReference type="GeneCards" id="NUP205"/>
<dbReference type="HGNC" id="HGNC:18658">
    <property type="gene designation" value="NUP205"/>
</dbReference>
<dbReference type="HPA" id="ENSG00000155561">
    <property type="expression patterns" value="Low tissue specificity"/>
</dbReference>
<dbReference type="MalaCards" id="NUP205"/>
<dbReference type="MIM" id="614352">
    <property type="type" value="gene"/>
</dbReference>
<dbReference type="MIM" id="616893">
    <property type="type" value="phenotype"/>
</dbReference>
<dbReference type="neXtProt" id="NX_Q92621"/>
<dbReference type="OpenTargets" id="ENSG00000155561"/>
<dbReference type="Orphanet" id="656">
    <property type="disease" value="Hereditary steroid-resistant nephrotic syndrome"/>
</dbReference>
<dbReference type="PharmGKB" id="PA38624"/>
<dbReference type="VEuPathDB" id="HostDB:ENSG00000155561"/>
<dbReference type="eggNOG" id="KOG1835">
    <property type="taxonomic scope" value="Eukaryota"/>
</dbReference>
<dbReference type="GeneTree" id="ENSGT00390000004003"/>
<dbReference type="HOGENOM" id="CLU_001929_0_0_1"/>
<dbReference type="InParanoid" id="Q92621"/>
<dbReference type="OMA" id="WSQMFAE"/>
<dbReference type="OrthoDB" id="2019644at2759"/>
<dbReference type="PAN-GO" id="Q92621">
    <property type="GO annotations" value="3 GO annotations based on evolutionary models"/>
</dbReference>
<dbReference type="PhylomeDB" id="Q92621"/>
<dbReference type="TreeFam" id="TF313397"/>
<dbReference type="PathwayCommons" id="Q92621"/>
<dbReference type="Reactome" id="R-HSA-1169408">
    <property type="pathway name" value="ISG15 antiviral mechanism"/>
</dbReference>
<dbReference type="Reactome" id="R-HSA-159227">
    <property type="pathway name" value="Transport of the SLBP independent Mature mRNA"/>
</dbReference>
<dbReference type="Reactome" id="R-HSA-159230">
    <property type="pathway name" value="Transport of the SLBP Dependant Mature mRNA"/>
</dbReference>
<dbReference type="Reactome" id="R-HSA-159231">
    <property type="pathway name" value="Transport of Mature mRNA Derived from an Intronless Transcript"/>
</dbReference>
<dbReference type="Reactome" id="R-HSA-159236">
    <property type="pathway name" value="Transport of Mature mRNA derived from an Intron-Containing Transcript"/>
</dbReference>
<dbReference type="Reactome" id="R-HSA-165054">
    <property type="pathway name" value="Rev-mediated nuclear export of HIV RNA"/>
</dbReference>
<dbReference type="Reactome" id="R-HSA-168271">
    <property type="pathway name" value="Transport of Ribonucleoproteins into the Host Nucleus"/>
</dbReference>
<dbReference type="Reactome" id="R-HSA-168276">
    <property type="pathway name" value="NS1 Mediated Effects on Host Pathways"/>
</dbReference>
<dbReference type="Reactome" id="R-HSA-168325">
    <property type="pathway name" value="Viral Messenger RNA Synthesis"/>
</dbReference>
<dbReference type="Reactome" id="R-HSA-168333">
    <property type="pathway name" value="NEP/NS2 Interacts with the Cellular Export Machinery"/>
</dbReference>
<dbReference type="Reactome" id="R-HSA-170822">
    <property type="pathway name" value="Regulation of Glucokinase by Glucokinase Regulatory Protein"/>
</dbReference>
<dbReference type="Reactome" id="R-HSA-180746">
    <property type="pathway name" value="Nuclear import of Rev protein"/>
</dbReference>
<dbReference type="Reactome" id="R-HSA-180910">
    <property type="pathway name" value="Vpr-mediated nuclear import of PICs"/>
</dbReference>
<dbReference type="Reactome" id="R-HSA-191859">
    <property type="pathway name" value="snRNP Assembly"/>
</dbReference>
<dbReference type="Reactome" id="R-HSA-3108214">
    <property type="pathway name" value="SUMOylation of DNA damage response and repair proteins"/>
</dbReference>
<dbReference type="Reactome" id="R-HSA-3232142">
    <property type="pathway name" value="SUMOylation of ubiquitinylation proteins"/>
</dbReference>
<dbReference type="Reactome" id="R-HSA-3301854">
    <property type="pathway name" value="Nuclear Pore Complex (NPC) Disassembly"/>
</dbReference>
<dbReference type="Reactome" id="R-HSA-3371453">
    <property type="pathway name" value="Regulation of HSF1-mediated heat shock response"/>
</dbReference>
<dbReference type="Reactome" id="R-HSA-4085377">
    <property type="pathway name" value="SUMOylation of SUMOylation proteins"/>
</dbReference>
<dbReference type="Reactome" id="R-HSA-4551638">
    <property type="pathway name" value="SUMOylation of chromatin organization proteins"/>
</dbReference>
<dbReference type="Reactome" id="R-HSA-4570464">
    <property type="pathway name" value="SUMOylation of RNA binding proteins"/>
</dbReference>
<dbReference type="Reactome" id="R-HSA-4615885">
    <property type="pathway name" value="SUMOylation of DNA replication proteins"/>
</dbReference>
<dbReference type="Reactome" id="R-HSA-5578749">
    <property type="pathway name" value="Transcriptional regulation by small RNAs"/>
</dbReference>
<dbReference type="Reactome" id="R-HSA-5619107">
    <property type="pathway name" value="Defective TPR may confer susceptibility towards thyroid papillary carcinoma (TPC)"/>
</dbReference>
<dbReference type="Reactome" id="R-HSA-6784531">
    <property type="pathway name" value="tRNA processing in the nucleus"/>
</dbReference>
<dbReference type="Reactome" id="R-HSA-9609690">
    <property type="pathway name" value="HCMV Early Events"/>
</dbReference>
<dbReference type="Reactome" id="R-HSA-9610379">
    <property type="pathway name" value="HCMV Late Events"/>
</dbReference>
<dbReference type="Reactome" id="R-HSA-9615933">
    <property type="pathway name" value="Postmitotic nuclear pore complex (NPC) reformation"/>
</dbReference>
<dbReference type="Reactome" id="R-HSA-9705671">
    <property type="pathway name" value="SARS-CoV-2 activates/modulates innate and adaptive immune responses"/>
</dbReference>
<dbReference type="SignaLink" id="Q92621"/>
<dbReference type="SIGNOR" id="Q92621"/>
<dbReference type="BioGRID-ORCS" id="23165">
    <property type="hits" value="700 hits in 1168 CRISPR screens"/>
</dbReference>
<dbReference type="CD-CODE" id="91857CE7">
    <property type="entry name" value="Nucleolus"/>
</dbReference>
<dbReference type="CD-CODE" id="D6A53B8E">
    <property type="entry name" value="Nuclear pore complex"/>
</dbReference>
<dbReference type="CD-CODE" id="DEE660B4">
    <property type="entry name" value="Stress granule"/>
</dbReference>
<dbReference type="ChiTaRS" id="NUP205">
    <property type="organism name" value="human"/>
</dbReference>
<dbReference type="GeneWiki" id="NUP205"/>
<dbReference type="GenomeRNAi" id="23165"/>
<dbReference type="Pharos" id="Q92621">
    <property type="development level" value="Tbio"/>
</dbReference>
<dbReference type="PRO" id="PR:Q92621"/>
<dbReference type="Proteomes" id="UP000005640">
    <property type="component" value="Chromosome 7"/>
</dbReference>
<dbReference type="RNAct" id="Q92621">
    <property type="molecule type" value="protein"/>
</dbReference>
<dbReference type="Bgee" id="ENSG00000155561">
    <property type="expression patterns" value="Expressed in ventricular zone and 174 other cell types or tissues"/>
</dbReference>
<dbReference type="ExpressionAtlas" id="Q92621">
    <property type="expression patterns" value="baseline and differential"/>
</dbReference>
<dbReference type="GO" id="GO:0005829">
    <property type="term" value="C:cytosol"/>
    <property type="evidence" value="ECO:0000304"/>
    <property type="project" value="Reactome"/>
</dbReference>
<dbReference type="GO" id="GO:0016020">
    <property type="term" value="C:membrane"/>
    <property type="evidence" value="ECO:0007005"/>
    <property type="project" value="UniProtKB"/>
</dbReference>
<dbReference type="GO" id="GO:0005635">
    <property type="term" value="C:nuclear envelope"/>
    <property type="evidence" value="ECO:0000314"/>
    <property type="project" value="ComplexPortal"/>
</dbReference>
<dbReference type="GO" id="GO:0031965">
    <property type="term" value="C:nuclear membrane"/>
    <property type="evidence" value="ECO:0000314"/>
    <property type="project" value="UniProtKB"/>
</dbReference>
<dbReference type="GO" id="GO:0034399">
    <property type="term" value="C:nuclear periphery"/>
    <property type="evidence" value="ECO:0000314"/>
    <property type="project" value="UniProtKB"/>
</dbReference>
<dbReference type="GO" id="GO:0005643">
    <property type="term" value="C:nuclear pore"/>
    <property type="evidence" value="ECO:0000314"/>
    <property type="project" value="UniProtKB"/>
</dbReference>
<dbReference type="GO" id="GO:0044611">
    <property type="term" value="C:nuclear pore inner ring"/>
    <property type="evidence" value="ECO:0000318"/>
    <property type="project" value="GO_Central"/>
</dbReference>
<dbReference type="GO" id="GO:0017056">
    <property type="term" value="F:structural constituent of nuclear pore"/>
    <property type="evidence" value="ECO:0000315"/>
    <property type="project" value="UniProtKB"/>
</dbReference>
<dbReference type="GO" id="GO:0051028">
    <property type="term" value="P:mRNA transport"/>
    <property type="evidence" value="ECO:0007669"/>
    <property type="project" value="UniProtKB-KW"/>
</dbReference>
<dbReference type="GO" id="GO:0051292">
    <property type="term" value="P:nuclear pore complex assembly"/>
    <property type="evidence" value="ECO:0000315"/>
    <property type="project" value="UniProtKB"/>
</dbReference>
<dbReference type="GO" id="GO:0006999">
    <property type="term" value="P:nuclear pore organization"/>
    <property type="evidence" value="ECO:0000318"/>
    <property type="project" value="GO_Central"/>
</dbReference>
<dbReference type="GO" id="GO:0006913">
    <property type="term" value="P:nucleocytoplasmic transport"/>
    <property type="evidence" value="ECO:0000304"/>
    <property type="project" value="UniProtKB"/>
</dbReference>
<dbReference type="GO" id="GO:0015031">
    <property type="term" value="P:protein transport"/>
    <property type="evidence" value="ECO:0007669"/>
    <property type="project" value="UniProtKB-KW"/>
</dbReference>
<dbReference type="InterPro" id="IPR021827">
    <property type="entry name" value="Nup186/Nup192/Nup205"/>
</dbReference>
<dbReference type="PANTHER" id="PTHR31344">
    <property type="entry name" value="NUCLEAR PORE COMPLEX PROTEIN NUP205"/>
    <property type="match status" value="1"/>
</dbReference>
<dbReference type="PANTHER" id="PTHR31344:SF0">
    <property type="entry name" value="NUCLEAR PORE COMPLEX PROTEIN NUP205"/>
    <property type="match status" value="1"/>
</dbReference>
<dbReference type="Pfam" id="PF11894">
    <property type="entry name" value="Nup192"/>
    <property type="match status" value="1"/>
</dbReference>